<protein>
    <recommendedName>
        <fullName>Protein GUCD1</fullName>
    </recommendedName>
    <alternativeName>
        <fullName>Guanylyl cyclase domain-containing protein 1</fullName>
    </alternativeName>
    <alternativeName>
        <fullName>Protein LLN4</fullName>
    </alternativeName>
</protein>
<evidence type="ECO:0000303" key="1">
    <source>
    </source>
</evidence>
<evidence type="ECO:0000303" key="2">
    <source>
    </source>
</evidence>
<evidence type="ECO:0000305" key="3"/>
<accession>Q96NT3</accession>
<accession>B5MCB8</accession>
<accession>B5MCL7</accession>
<accession>Q96Q79</accession>
<accession>Q9BU32</accession>
<feature type="chain" id="PRO_0000079574" description="Protein GUCD1">
    <location>
        <begin position="1"/>
        <end position="240"/>
    </location>
</feature>
<feature type="splice variant" id="VSP_055753" description="In isoform 3." evidence="1">
    <original>MRTEAEAAGPPLE</original>
    <variation>MTGPGGRRNDPWGRQRAREGAHTSKHPTPRTGWTARRRRGAWALRPGTAGGWAKGQDFPSQFHLLIPAP</variation>
    <location>
        <begin position="1"/>
        <end position="13"/>
    </location>
</feature>
<feature type="splice variant" id="VSP_044730" description="In isoform 2 and isoform 3." evidence="1 2">
    <original>PG</original>
    <variation>R</variation>
    <location>
        <begin position="210"/>
        <end position="211"/>
    </location>
</feature>
<feature type="sequence conflict" description="In Ref. 3; AAH02924." evidence="3" ref="3">
    <original>LE</original>
    <variation>AP</variation>
    <location>
        <begin position="12"/>
        <end position="13"/>
    </location>
</feature>
<gene>
    <name type="primary">GUCD1</name>
    <name type="synonym">C22orf13</name>
    <name type="synonym">LLN4</name>
</gene>
<keyword id="KW-0025">Alternative splicing</keyword>
<keyword id="KW-1267">Proteomics identification</keyword>
<keyword id="KW-1185">Reference proteome</keyword>
<reference key="1">
    <citation type="journal article" date="2004" name="Nat. Genet.">
        <title>Complete sequencing and characterization of 21,243 full-length human cDNAs.</title>
        <authorList>
            <person name="Ota T."/>
            <person name="Suzuki Y."/>
            <person name="Nishikawa T."/>
            <person name="Otsuki T."/>
            <person name="Sugiyama T."/>
            <person name="Irie R."/>
            <person name="Wakamatsu A."/>
            <person name="Hayashi K."/>
            <person name="Sato H."/>
            <person name="Nagai K."/>
            <person name="Kimura K."/>
            <person name="Makita H."/>
            <person name="Sekine M."/>
            <person name="Obayashi M."/>
            <person name="Nishi T."/>
            <person name="Shibahara T."/>
            <person name="Tanaka T."/>
            <person name="Ishii S."/>
            <person name="Yamamoto J."/>
            <person name="Saito K."/>
            <person name="Kawai Y."/>
            <person name="Isono Y."/>
            <person name="Nakamura Y."/>
            <person name="Nagahari K."/>
            <person name="Murakami K."/>
            <person name="Yasuda T."/>
            <person name="Iwayanagi T."/>
            <person name="Wagatsuma M."/>
            <person name="Shiratori A."/>
            <person name="Sudo H."/>
            <person name="Hosoiri T."/>
            <person name="Kaku Y."/>
            <person name="Kodaira H."/>
            <person name="Kondo H."/>
            <person name="Sugawara M."/>
            <person name="Takahashi M."/>
            <person name="Kanda K."/>
            <person name="Yokoi T."/>
            <person name="Furuya T."/>
            <person name="Kikkawa E."/>
            <person name="Omura Y."/>
            <person name="Abe K."/>
            <person name="Kamihara K."/>
            <person name="Katsuta N."/>
            <person name="Sato K."/>
            <person name="Tanikawa M."/>
            <person name="Yamazaki M."/>
            <person name="Ninomiya K."/>
            <person name="Ishibashi T."/>
            <person name="Yamashita H."/>
            <person name="Murakawa K."/>
            <person name="Fujimori K."/>
            <person name="Tanai H."/>
            <person name="Kimata M."/>
            <person name="Watanabe M."/>
            <person name="Hiraoka S."/>
            <person name="Chiba Y."/>
            <person name="Ishida S."/>
            <person name="Ono Y."/>
            <person name="Takiguchi S."/>
            <person name="Watanabe S."/>
            <person name="Yosida M."/>
            <person name="Hotuta T."/>
            <person name="Kusano J."/>
            <person name="Kanehori K."/>
            <person name="Takahashi-Fujii A."/>
            <person name="Hara H."/>
            <person name="Tanase T.-O."/>
            <person name="Nomura Y."/>
            <person name="Togiya S."/>
            <person name="Komai F."/>
            <person name="Hara R."/>
            <person name="Takeuchi K."/>
            <person name="Arita M."/>
            <person name="Imose N."/>
            <person name="Musashino K."/>
            <person name="Yuuki H."/>
            <person name="Oshima A."/>
            <person name="Sasaki N."/>
            <person name="Aotsuka S."/>
            <person name="Yoshikawa Y."/>
            <person name="Matsunawa H."/>
            <person name="Ichihara T."/>
            <person name="Shiohata N."/>
            <person name="Sano S."/>
            <person name="Moriya S."/>
            <person name="Momiyama H."/>
            <person name="Satoh N."/>
            <person name="Takami S."/>
            <person name="Terashima Y."/>
            <person name="Suzuki O."/>
            <person name="Nakagawa S."/>
            <person name="Senoh A."/>
            <person name="Mizoguchi H."/>
            <person name="Goto Y."/>
            <person name="Shimizu F."/>
            <person name="Wakebe H."/>
            <person name="Hishigaki H."/>
            <person name="Watanabe T."/>
            <person name="Sugiyama A."/>
            <person name="Takemoto M."/>
            <person name="Kawakami B."/>
            <person name="Yamazaki M."/>
            <person name="Watanabe K."/>
            <person name="Kumagai A."/>
            <person name="Itakura S."/>
            <person name="Fukuzumi Y."/>
            <person name="Fujimori Y."/>
            <person name="Komiyama M."/>
            <person name="Tashiro H."/>
            <person name="Tanigami A."/>
            <person name="Fujiwara T."/>
            <person name="Ono T."/>
            <person name="Yamada K."/>
            <person name="Fujii Y."/>
            <person name="Ozaki K."/>
            <person name="Hirao M."/>
            <person name="Ohmori Y."/>
            <person name="Kawabata A."/>
            <person name="Hikiji T."/>
            <person name="Kobatake N."/>
            <person name="Inagaki H."/>
            <person name="Ikema Y."/>
            <person name="Okamoto S."/>
            <person name="Okitani R."/>
            <person name="Kawakami T."/>
            <person name="Noguchi S."/>
            <person name="Itoh T."/>
            <person name="Shigeta K."/>
            <person name="Senba T."/>
            <person name="Matsumura K."/>
            <person name="Nakajima Y."/>
            <person name="Mizuno T."/>
            <person name="Morinaga M."/>
            <person name="Sasaki M."/>
            <person name="Togashi T."/>
            <person name="Oyama M."/>
            <person name="Hata H."/>
            <person name="Watanabe M."/>
            <person name="Komatsu T."/>
            <person name="Mizushima-Sugano J."/>
            <person name="Satoh T."/>
            <person name="Shirai Y."/>
            <person name="Takahashi Y."/>
            <person name="Nakagawa K."/>
            <person name="Okumura K."/>
            <person name="Nagase T."/>
            <person name="Nomura N."/>
            <person name="Kikuchi H."/>
            <person name="Masuho Y."/>
            <person name="Yamashita R."/>
            <person name="Nakai K."/>
            <person name="Yada T."/>
            <person name="Nakamura Y."/>
            <person name="Ohara O."/>
            <person name="Isogai T."/>
            <person name="Sugano S."/>
        </authorList>
    </citation>
    <scope>NUCLEOTIDE SEQUENCE [LARGE SCALE MRNA] (ISOFORMS 2 AND 3)</scope>
    <source>
        <tissue>Cerebellum</tissue>
    </source>
</reference>
<reference key="2">
    <citation type="journal article" date="1999" name="Nature">
        <title>The DNA sequence of human chromosome 22.</title>
        <authorList>
            <person name="Dunham I."/>
            <person name="Hunt A.R."/>
            <person name="Collins J.E."/>
            <person name="Bruskiewich R."/>
            <person name="Beare D.M."/>
            <person name="Clamp M."/>
            <person name="Smink L.J."/>
            <person name="Ainscough R."/>
            <person name="Almeida J.P."/>
            <person name="Babbage A.K."/>
            <person name="Bagguley C."/>
            <person name="Bailey J."/>
            <person name="Barlow K.F."/>
            <person name="Bates K.N."/>
            <person name="Beasley O.P."/>
            <person name="Bird C.P."/>
            <person name="Blakey S.E."/>
            <person name="Bridgeman A.M."/>
            <person name="Buck D."/>
            <person name="Burgess J."/>
            <person name="Burrill W.D."/>
            <person name="Burton J."/>
            <person name="Carder C."/>
            <person name="Carter N.P."/>
            <person name="Chen Y."/>
            <person name="Clark G."/>
            <person name="Clegg S.M."/>
            <person name="Cobley V.E."/>
            <person name="Cole C.G."/>
            <person name="Collier R.E."/>
            <person name="Connor R."/>
            <person name="Conroy D."/>
            <person name="Corby N.R."/>
            <person name="Coville G.J."/>
            <person name="Cox A.V."/>
            <person name="Davis J."/>
            <person name="Dawson E."/>
            <person name="Dhami P.D."/>
            <person name="Dockree C."/>
            <person name="Dodsworth S.J."/>
            <person name="Durbin R.M."/>
            <person name="Ellington A.G."/>
            <person name="Evans K.L."/>
            <person name="Fey J.M."/>
            <person name="Fleming K."/>
            <person name="French L."/>
            <person name="Garner A.A."/>
            <person name="Gilbert J.G.R."/>
            <person name="Goward M.E."/>
            <person name="Grafham D.V."/>
            <person name="Griffiths M.N.D."/>
            <person name="Hall C."/>
            <person name="Hall R.E."/>
            <person name="Hall-Tamlyn G."/>
            <person name="Heathcott R.W."/>
            <person name="Ho S."/>
            <person name="Holmes S."/>
            <person name="Hunt S.E."/>
            <person name="Jones M.C."/>
            <person name="Kershaw J."/>
            <person name="Kimberley A.M."/>
            <person name="King A."/>
            <person name="Laird G.K."/>
            <person name="Langford C.F."/>
            <person name="Leversha M.A."/>
            <person name="Lloyd C."/>
            <person name="Lloyd D.M."/>
            <person name="Martyn I.D."/>
            <person name="Mashreghi-Mohammadi M."/>
            <person name="Matthews L.H."/>
            <person name="Mccann O.T."/>
            <person name="Mcclay J."/>
            <person name="Mclaren S."/>
            <person name="McMurray A.A."/>
            <person name="Milne S.A."/>
            <person name="Mortimore B.J."/>
            <person name="Odell C.N."/>
            <person name="Pavitt R."/>
            <person name="Pearce A.V."/>
            <person name="Pearson D."/>
            <person name="Phillimore B.J.C.T."/>
            <person name="Phillips S.H."/>
            <person name="Plumb R.W."/>
            <person name="Ramsay H."/>
            <person name="Ramsey Y."/>
            <person name="Rogers L."/>
            <person name="Ross M.T."/>
            <person name="Scott C.E."/>
            <person name="Sehra H.K."/>
            <person name="Skuce C.D."/>
            <person name="Smalley S."/>
            <person name="Smith M.L."/>
            <person name="Soderlund C."/>
            <person name="Spragon L."/>
            <person name="Steward C.A."/>
            <person name="Sulston J.E."/>
            <person name="Swann R.M."/>
            <person name="Vaudin M."/>
            <person name="Wall M."/>
            <person name="Wallis J.M."/>
            <person name="Whiteley M.N."/>
            <person name="Willey D.L."/>
            <person name="Williams L."/>
            <person name="Williams S.A."/>
            <person name="Williamson H."/>
            <person name="Wilmer T.E."/>
            <person name="Wilming L."/>
            <person name="Wright C.L."/>
            <person name="Hubbard T."/>
            <person name="Bentley D.R."/>
            <person name="Beck S."/>
            <person name="Rogers J."/>
            <person name="Shimizu N."/>
            <person name="Minoshima S."/>
            <person name="Kawasaki K."/>
            <person name="Sasaki T."/>
            <person name="Asakawa S."/>
            <person name="Kudoh J."/>
            <person name="Shintani A."/>
            <person name="Shibuya K."/>
            <person name="Yoshizaki Y."/>
            <person name="Aoki N."/>
            <person name="Mitsuyama S."/>
            <person name="Roe B.A."/>
            <person name="Chen F."/>
            <person name="Chu L."/>
            <person name="Crabtree J."/>
            <person name="Deschamps S."/>
            <person name="Do A."/>
            <person name="Do T."/>
            <person name="Dorman A."/>
            <person name="Fang F."/>
            <person name="Fu Y."/>
            <person name="Hu P."/>
            <person name="Hua A."/>
            <person name="Kenton S."/>
            <person name="Lai H."/>
            <person name="Lao H.I."/>
            <person name="Lewis J."/>
            <person name="Lewis S."/>
            <person name="Lin S.-P."/>
            <person name="Loh P."/>
            <person name="Malaj E."/>
            <person name="Nguyen T."/>
            <person name="Pan H."/>
            <person name="Phan S."/>
            <person name="Qi S."/>
            <person name="Qian Y."/>
            <person name="Ray L."/>
            <person name="Ren Q."/>
            <person name="Shaull S."/>
            <person name="Sloan D."/>
            <person name="Song L."/>
            <person name="Wang Q."/>
            <person name="Wang Y."/>
            <person name="Wang Z."/>
            <person name="White J."/>
            <person name="Willingham D."/>
            <person name="Wu H."/>
            <person name="Yao Z."/>
            <person name="Zhan M."/>
            <person name="Zhang G."/>
            <person name="Chissoe S."/>
            <person name="Murray J."/>
            <person name="Miller N."/>
            <person name="Minx P."/>
            <person name="Fulton R."/>
            <person name="Johnson D."/>
            <person name="Bemis G."/>
            <person name="Bentley D."/>
            <person name="Bradshaw H."/>
            <person name="Bourne S."/>
            <person name="Cordes M."/>
            <person name="Du Z."/>
            <person name="Fulton L."/>
            <person name="Goela D."/>
            <person name="Graves T."/>
            <person name="Hawkins J."/>
            <person name="Hinds K."/>
            <person name="Kemp K."/>
            <person name="Latreille P."/>
            <person name="Layman D."/>
            <person name="Ozersky P."/>
            <person name="Rohlfing T."/>
            <person name="Scheet P."/>
            <person name="Walker C."/>
            <person name="Wamsley A."/>
            <person name="Wohldmann P."/>
            <person name="Pepin K."/>
            <person name="Nelson J."/>
            <person name="Korf I."/>
            <person name="Bedell J.A."/>
            <person name="Hillier L.W."/>
            <person name="Mardis E."/>
            <person name="Waterston R."/>
            <person name="Wilson R."/>
            <person name="Emanuel B.S."/>
            <person name="Shaikh T."/>
            <person name="Kurahashi H."/>
            <person name="Saitta S."/>
            <person name="Budarf M.L."/>
            <person name="McDermid H.E."/>
            <person name="Johnson A."/>
            <person name="Wong A.C.C."/>
            <person name="Morrow B.E."/>
            <person name="Edelmann L."/>
            <person name="Kim U.J."/>
            <person name="Shizuya H."/>
            <person name="Simon M.I."/>
            <person name="Dumanski J.P."/>
            <person name="Peyrard M."/>
            <person name="Kedra D."/>
            <person name="Seroussi E."/>
            <person name="Fransson I."/>
            <person name="Tapia I."/>
            <person name="Bruder C.E."/>
            <person name="O'Brien K.P."/>
            <person name="Wilkinson P."/>
            <person name="Bodenteich A."/>
            <person name="Hartman K."/>
            <person name="Hu X."/>
            <person name="Khan A.S."/>
            <person name="Lane L."/>
            <person name="Tilahun Y."/>
            <person name="Wright H."/>
        </authorList>
    </citation>
    <scope>NUCLEOTIDE SEQUENCE [LARGE SCALE GENOMIC DNA]</scope>
</reference>
<reference key="3">
    <citation type="journal article" date="2004" name="Genome Res.">
        <title>The status, quality, and expansion of the NIH full-length cDNA project: the Mammalian Gene Collection (MGC).</title>
        <authorList>
            <consortium name="The MGC Project Team"/>
        </authorList>
    </citation>
    <scope>NUCLEOTIDE SEQUENCE [LARGE SCALE MRNA] (ISOFORM 2)</scope>
    <scope>NUCLEOTIDE SEQUENCE [LARGE SCALE MRNA] OF 11-240 (ISOFORM 1)</scope>
    <source>
        <tissue>Placenta</tissue>
        <tissue>Testis</tissue>
    </source>
</reference>
<reference key="4">
    <citation type="submission" date="2005-07" db="EMBL/GenBank/DDBJ databases">
        <authorList>
            <person name="Mural R.J."/>
            <person name="Istrail S."/>
            <person name="Sutton G.G."/>
            <person name="Florea L."/>
            <person name="Halpern A.L."/>
            <person name="Mobarry C.M."/>
            <person name="Lippert R."/>
            <person name="Walenz B."/>
            <person name="Shatkay H."/>
            <person name="Dew I."/>
            <person name="Miller J.R."/>
            <person name="Flanigan M.J."/>
            <person name="Edwards N.J."/>
            <person name="Bolanos R."/>
            <person name="Fasulo D."/>
            <person name="Halldorsson B.V."/>
            <person name="Hannenhalli S."/>
            <person name="Turner R."/>
            <person name="Yooseph S."/>
            <person name="Lu F."/>
            <person name="Nusskern D.R."/>
            <person name="Shue B.C."/>
            <person name="Zheng X.H."/>
            <person name="Zhong F."/>
            <person name="Delcher A.L."/>
            <person name="Huson D.H."/>
            <person name="Kravitz S.A."/>
            <person name="Mouchard L."/>
            <person name="Reinert K."/>
            <person name="Remington K.A."/>
            <person name="Clark A.G."/>
            <person name="Waterman M.S."/>
            <person name="Eichler E.E."/>
            <person name="Adams M.D."/>
            <person name="Hunkapiller M.W."/>
            <person name="Myers E.W."/>
            <person name="Venter J.C."/>
        </authorList>
    </citation>
    <scope>NUCLEOTIDE SEQUENCE [LARGE SCALE GENOMIC DNA]</scope>
</reference>
<reference key="5">
    <citation type="submission" date="2000-09" db="EMBL/GenBank/DDBJ databases">
        <title>Molecular cloning of a novel gene.</title>
        <authorList>
            <person name="Shimizu N."/>
            <person name="Minosima S."/>
            <person name="Kawasaki K."/>
            <person name="Sasaki T."/>
        </authorList>
    </citation>
    <scope>NUCLEOTIDE SEQUENCE [GENOMIC DNA] OF 15-239 (ISOFORM 2)</scope>
</reference>
<comment type="interaction">
    <interactant intactId="EBI-8293751">
        <id>Q96NT3</id>
    </interactant>
    <interactant intactId="EBI-748171">
        <id>O43186</id>
        <label>CRX</label>
    </interactant>
    <organismsDiffer>false</organismsDiffer>
    <experiments>3</experiments>
</comment>
<comment type="interaction">
    <interactant intactId="EBI-8293751">
        <id>Q96NT3</id>
    </interactant>
    <interactant intactId="EBI-749763">
        <id>P32929</id>
        <label>CTH</label>
    </interactant>
    <organismsDiffer>false</organismsDiffer>
    <experiments>3</experiments>
</comment>
<comment type="interaction">
    <interactant intactId="EBI-8293751">
        <id>Q96NT3</id>
    </interactant>
    <interactant intactId="EBI-10171697">
        <id>Q6A162</id>
        <label>KRT40</label>
    </interactant>
    <organismsDiffer>false</organismsDiffer>
    <experiments>3</experiments>
</comment>
<comment type="interaction">
    <interactant intactId="EBI-8293751">
        <id>Q96NT3</id>
    </interactant>
    <interactant intactId="EBI-10172290">
        <id>P60409</id>
        <label>KRTAP10-7</label>
    </interactant>
    <organismsDiffer>false</organismsDiffer>
    <experiments>3</experiments>
</comment>
<comment type="interaction">
    <interactant intactId="EBI-8293751">
        <id>Q96NT3</id>
    </interactant>
    <interactant intactId="EBI-6165879">
        <id>Q96IV0</id>
        <label>NGLY1</label>
    </interactant>
    <organismsDiffer>false</organismsDiffer>
    <experiments>4</experiments>
</comment>
<comment type="interaction">
    <interactant intactId="EBI-8293751">
        <id>Q96NT3</id>
    </interactant>
    <interactant intactId="EBI-533224">
        <id>P15884</id>
        <label>TCF4</label>
    </interactant>
    <organismsDiffer>false</organismsDiffer>
    <experiments>3</experiments>
</comment>
<comment type="interaction">
    <interactant intactId="EBI-11978177">
        <id>Q96NT3-2</id>
    </interactant>
    <interactant intactId="EBI-12006944">
        <id>O43184-4</id>
        <label>ADAM12</label>
    </interactant>
    <organismsDiffer>false</organismsDiffer>
    <experiments>3</experiments>
</comment>
<comment type="interaction">
    <interactant intactId="EBI-11978177">
        <id>Q96NT3-2</id>
    </interactant>
    <interactant intactId="EBI-10173507">
        <id>Q6UY14-3</id>
        <label>ADAMTSL4</label>
    </interactant>
    <organismsDiffer>false</organismsDiffer>
    <experiments>3</experiments>
</comment>
<comment type="interaction">
    <interactant intactId="EBI-11978177">
        <id>Q96NT3-2</id>
    </interactant>
    <interactant intactId="EBI-12811889">
        <id>Q9Y6H3</id>
        <label>ATP23</label>
    </interactant>
    <organismsDiffer>false</organismsDiffer>
    <experiments>3</experiments>
</comment>
<comment type="interaction">
    <interactant intactId="EBI-11978177">
        <id>Q96NT3-2</id>
    </interactant>
    <interactant intactId="EBI-742722">
        <id>Q9BUH8</id>
        <label>BEGAIN</label>
    </interactant>
    <organismsDiffer>false</organismsDiffer>
    <experiments>3</experiments>
</comment>
<comment type="interaction">
    <interactant intactId="EBI-11978177">
        <id>Q96NT3-2</id>
    </interactant>
    <interactant intactId="EBI-11523759">
        <id>Q8N684-3</id>
        <label>CPSF7</label>
    </interactant>
    <organismsDiffer>false</organismsDiffer>
    <experiments>3</experiments>
</comment>
<comment type="interaction">
    <interactant intactId="EBI-11978177">
        <id>Q96NT3-2</id>
    </interactant>
    <interactant intactId="EBI-1188472">
        <id>P78358</id>
        <label>CTAG1B</label>
    </interactant>
    <organismsDiffer>false</organismsDiffer>
    <experiments>3</experiments>
</comment>
<comment type="interaction">
    <interactant intactId="EBI-11978177">
        <id>Q96NT3-2</id>
    </interactant>
    <interactant intactId="EBI-749763">
        <id>P32929</id>
        <label>CTH</label>
    </interactant>
    <organismsDiffer>false</organismsDiffer>
    <experiments>3</experiments>
</comment>
<comment type="interaction">
    <interactant intactId="EBI-11978177">
        <id>Q96NT3-2</id>
    </interactant>
    <interactant intactId="EBI-3867333">
        <id>A8MQ03</id>
        <label>CYSRT1</label>
    </interactant>
    <organismsDiffer>false</organismsDiffer>
    <experiments>3</experiments>
</comment>
<comment type="interaction">
    <interactant intactId="EBI-11978177">
        <id>Q96NT3-2</id>
    </interactant>
    <interactant intactId="EBI-11974185">
        <id>Q494R4-2</id>
        <label>DRC12</label>
    </interactant>
    <organismsDiffer>false</organismsDiffer>
    <experiments>3</experiments>
</comment>
<comment type="interaction">
    <interactant intactId="EBI-11978177">
        <id>Q96NT3-2</id>
    </interactant>
    <interactant intactId="EBI-11977403">
        <id>A0A0C3SFZ9</id>
        <label>FCHO1</label>
    </interactant>
    <organismsDiffer>false</organismsDiffer>
    <experiments>3</experiments>
</comment>
<comment type="interaction">
    <interactant intactId="EBI-11978177">
        <id>Q96NT3-2</id>
    </interactant>
    <interactant intactId="EBI-741101">
        <id>Q13643</id>
        <label>FHL3</label>
    </interactant>
    <organismsDiffer>false</organismsDiffer>
    <experiments>3</experiments>
</comment>
<comment type="interaction">
    <interactant intactId="EBI-11978177">
        <id>Q96NT3-2</id>
    </interactant>
    <interactant intactId="EBI-9050116">
        <id>Q9BTY2</id>
        <label>FUCA2</label>
    </interactant>
    <organismsDiffer>false</organismsDiffer>
    <experiments>3</experiments>
</comment>
<comment type="interaction">
    <interactant intactId="EBI-11978177">
        <id>Q96NT3-2</id>
    </interactant>
    <interactant intactId="EBI-8470369">
        <id>Q9UBX0</id>
        <label>HESX1</label>
    </interactant>
    <organismsDiffer>false</organismsDiffer>
    <experiments>3</experiments>
</comment>
<comment type="interaction">
    <interactant intactId="EBI-11978177">
        <id>Q96NT3-2</id>
    </interactant>
    <interactant intactId="EBI-740785">
        <id>P49639</id>
        <label>HOXA1</label>
    </interactant>
    <organismsDiffer>false</organismsDiffer>
    <experiments>5</experiments>
</comment>
<comment type="interaction">
    <interactant intactId="EBI-11978177">
        <id>Q96NT3-2</id>
    </interactant>
    <interactant intactId="EBI-739361">
        <id>Q9UBY9</id>
        <label>HSPB7</label>
    </interactant>
    <organismsDiffer>false</organismsDiffer>
    <experiments>3</experiments>
</comment>
<comment type="interaction">
    <interactant intactId="EBI-11978177">
        <id>Q96NT3-2</id>
    </interactant>
    <interactant intactId="EBI-1387094">
        <id>Q02535</id>
        <label>ID3</label>
    </interactant>
    <organismsDiffer>false</organismsDiffer>
    <experiments>3</experiments>
</comment>
<comment type="interaction">
    <interactant intactId="EBI-11978177">
        <id>Q96NT3-2</id>
    </interactant>
    <interactant intactId="EBI-10258659">
        <id>Q86U28</id>
        <label>ISCA2</label>
    </interactant>
    <organismsDiffer>false</organismsDiffer>
    <experiments>3</experiments>
</comment>
<comment type="interaction">
    <interactant intactId="EBI-11978177">
        <id>Q96NT3-2</id>
    </interactant>
    <interactant intactId="EBI-715394">
        <id>Q9H079</id>
        <label>KATNBL1</label>
    </interactant>
    <organismsDiffer>false</organismsDiffer>
    <experiments>3</experiments>
</comment>
<comment type="interaction">
    <interactant intactId="EBI-11978177">
        <id>Q96NT3-2</id>
    </interactant>
    <interactant intactId="EBI-10981970">
        <id>Q5T749</id>
        <label>KPRP</label>
    </interactant>
    <organismsDiffer>false</organismsDiffer>
    <experiments>3</experiments>
</comment>
<comment type="interaction">
    <interactant intactId="EBI-11978177">
        <id>Q96NT3-2</id>
    </interactant>
    <interactant intactId="EBI-11959885">
        <id>Q07627</id>
        <label>KRTAP1-1</label>
    </interactant>
    <organismsDiffer>false</organismsDiffer>
    <experiments>3</experiments>
</comment>
<comment type="interaction">
    <interactant intactId="EBI-11978177">
        <id>Q96NT3-2</id>
    </interactant>
    <interactant intactId="EBI-11741292">
        <id>Q9BYS1</id>
        <label>KRTAP1-5</label>
    </interactant>
    <organismsDiffer>false</organismsDiffer>
    <experiments>3</experiments>
</comment>
<comment type="interaction">
    <interactant intactId="EBI-11978177">
        <id>Q96NT3-2</id>
    </interactant>
    <interactant intactId="EBI-10171774">
        <id>P60410</id>
        <label>KRTAP10-8</label>
    </interactant>
    <organismsDiffer>false</organismsDiffer>
    <experiments>5</experiments>
</comment>
<comment type="interaction">
    <interactant intactId="EBI-11978177">
        <id>Q96NT3-2</id>
    </interactant>
    <interactant intactId="EBI-10172052">
        <id>P60411</id>
        <label>KRTAP10-9</label>
    </interactant>
    <organismsDiffer>false</organismsDiffer>
    <experiments>3</experiments>
</comment>
<comment type="interaction">
    <interactant intactId="EBI-11978177">
        <id>Q96NT3-2</id>
    </interactant>
    <interactant intactId="EBI-10241252">
        <id>Q3SY46</id>
        <label>KRTAP13-3</label>
    </interactant>
    <organismsDiffer>false</organismsDiffer>
    <experiments>5</experiments>
</comment>
<comment type="interaction">
    <interactant intactId="EBI-11978177">
        <id>Q96NT3-2</id>
    </interactant>
    <interactant intactId="EBI-1048945">
        <id>Q3LI72</id>
        <label>KRTAP19-5</label>
    </interactant>
    <organismsDiffer>false</organismsDiffer>
    <experiments>3</experiments>
</comment>
<comment type="interaction">
    <interactant intactId="EBI-11978177">
        <id>Q96NT3-2</id>
    </interactant>
    <interactant intactId="EBI-12805508">
        <id>Q3LI70</id>
        <label>KRTAP19-6</label>
    </interactant>
    <organismsDiffer>false</organismsDiffer>
    <experiments>3</experiments>
</comment>
<comment type="interaction">
    <interactant intactId="EBI-11978177">
        <id>Q96NT3-2</id>
    </interactant>
    <interactant intactId="EBI-751260">
        <id>Q9BYR7</id>
        <label>KRTAP3-2</label>
    </interactant>
    <organismsDiffer>false</organismsDiffer>
    <experiments>3</experiments>
</comment>
<comment type="interaction">
    <interactant intactId="EBI-11978177">
        <id>Q96NT3-2</id>
    </interactant>
    <interactant intactId="EBI-3957694">
        <id>Q9BYR6</id>
        <label>KRTAP3-3</label>
    </interactant>
    <organismsDiffer>false</organismsDiffer>
    <experiments>3</experiments>
</comment>
<comment type="interaction">
    <interactant intactId="EBI-11978177">
        <id>Q96NT3-2</id>
    </interactant>
    <interactant intactId="EBI-10172511">
        <id>Q9BYR5</id>
        <label>KRTAP4-2</label>
    </interactant>
    <organismsDiffer>false</organismsDiffer>
    <experiments>3</experiments>
</comment>
<comment type="interaction">
    <interactant intactId="EBI-11978177">
        <id>Q96NT3-2</id>
    </interactant>
    <interactant intactId="EBI-10250562">
        <id>Q6L8G9</id>
        <label>KRTAP5-6</label>
    </interactant>
    <organismsDiffer>false</organismsDiffer>
    <experiments>3</experiments>
</comment>
<comment type="interaction">
    <interactant intactId="EBI-11978177">
        <id>Q96NT3-2</id>
    </interactant>
    <interactant intactId="EBI-11987425">
        <id>Q6L8G8</id>
        <label>KRTAP5-7</label>
    </interactant>
    <organismsDiffer>false</organismsDiffer>
    <experiments>3</experiments>
</comment>
<comment type="interaction">
    <interactant intactId="EBI-11978177">
        <id>Q96NT3-2</id>
    </interactant>
    <interactant intactId="EBI-1044640">
        <id>Q9BYQ4</id>
        <label>KRTAP9-2</label>
    </interactant>
    <organismsDiffer>false</organismsDiffer>
    <experiments>3</experiments>
</comment>
<comment type="interaction">
    <interactant intactId="EBI-11978177">
        <id>Q96NT3-2</id>
    </interactant>
    <interactant intactId="EBI-11958364">
        <id>Q9BYQ0</id>
        <label>KRTAP9-8</label>
    </interactant>
    <organismsDiffer>false</organismsDiffer>
    <experiments>3</experiments>
</comment>
<comment type="interaction">
    <interactant intactId="EBI-11978177">
        <id>Q96NT3-2</id>
    </interactant>
    <interactant intactId="EBI-9088686">
        <id>Q14847-2</id>
        <label>LASP1</label>
    </interactant>
    <organismsDiffer>false</organismsDiffer>
    <experiments>3</experiments>
</comment>
<comment type="interaction">
    <interactant intactId="EBI-11978177">
        <id>Q96NT3-2</id>
    </interactant>
    <interactant intactId="EBI-12224199">
        <id>Q5T751</id>
        <label>LCE1C</label>
    </interactant>
    <organismsDiffer>false</organismsDiffer>
    <experiments>3</experiments>
</comment>
<comment type="interaction">
    <interactant intactId="EBI-11978177">
        <id>Q96NT3-2</id>
    </interactant>
    <interactant intactId="EBI-10246607">
        <id>Q5TA79</id>
        <label>LCE2A</label>
    </interactant>
    <organismsDiffer>false</organismsDiffer>
    <experiments>3</experiments>
</comment>
<comment type="interaction">
    <interactant intactId="EBI-11978177">
        <id>Q96NT3-2</id>
    </interactant>
    <interactant intactId="EBI-11478468">
        <id>O14633</id>
        <label>LCE2B</label>
    </interactant>
    <organismsDiffer>false</organismsDiffer>
    <experiments>4</experiments>
</comment>
<comment type="interaction">
    <interactant intactId="EBI-11978177">
        <id>Q96NT3-2</id>
    </interactant>
    <interactant intactId="EBI-10246750">
        <id>Q5TA82</id>
        <label>LCE2D</label>
    </interactant>
    <organismsDiffer>false</organismsDiffer>
    <experiments>3</experiments>
</comment>
<comment type="interaction">
    <interactant intactId="EBI-11978177">
        <id>Q96NT3-2</id>
    </interactant>
    <interactant intactId="EBI-12039345">
        <id>Q9UBR4-2</id>
        <label>LHX3</label>
    </interactant>
    <organismsDiffer>false</organismsDiffer>
    <experiments>3</experiments>
</comment>
<comment type="interaction">
    <interactant intactId="EBI-11978177">
        <id>Q96NT3-2</id>
    </interactant>
    <interactant intactId="EBI-739832">
        <id>Q8TBB1</id>
        <label>LNX1</label>
    </interactant>
    <organismsDiffer>false</organismsDiffer>
    <experiments>3</experiments>
</comment>
<comment type="interaction">
    <interactant intactId="EBI-11978177">
        <id>Q96NT3-2</id>
    </interactant>
    <interactant intactId="EBI-307294">
        <id>Q13163</id>
        <label>MAP2K5</label>
    </interactant>
    <organismsDiffer>false</organismsDiffer>
    <experiments>3</experiments>
</comment>
<comment type="interaction">
    <interactant intactId="EBI-11978177">
        <id>Q96NT3-2</id>
    </interactant>
    <interactant intactId="EBI-16439278">
        <id>Q6FHY5</id>
        <label>MEOX2</label>
    </interactant>
    <organismsDiffer>false</organismsDiffer>
    <experiments>3</experiments>
</comment>
<comment type="interaction">
    <interactant intactId="EBI-11978177">
        <id>Q96NT3-2</id>
    </interactant>
    <interactant intactId="EBI-9675802">
        <id>Q6PF18</id>
        <label>MORN3</label>
    </interactant>
    <organismsDiffer>false</organismsDiffer>
    <experiments>3</experiments>
</comment>
<comment type="interaction">
    <interactant intactId="EBI-11978177">
        <id>Q96NT3-2</id>
    </interactant>
    <interactant intactId="EBI-10269566">
        <id>Q8NDC4</id>
        <label>MORN4</label>
    </interactant>
    <organismsDiffer>false</organismsDiffer>
    <experiments>3</experiments>
</comment>
<comment type="interaction">
    <interactant intactId="EBI-11978177">
        <id>Q96NT3-2</id>
    </interactant>
    <interactant intactId="EBI-12957691">
        <id>Q330K2-3</id>
        <label>NDUFAF6</label>
    </interactant>
    <organismsDiffer>false</organismsDiffer>
    <experiments>3</experiments>
</comment>
<comment type="interaction">
    <interactant intactId="EBI-11978177">
        <id>Q96NT3-2</id>
    </interactant>
    <interactant intactId="EBI-6165879">
        <id>Q96IV0</id>
        <label>NGLY1</label>
    </interactant>
    <organismsDiffer>false</organismsDiffer>
    <experiments>3</experiments>
</comment>
<comment type="interaction">
    <interactant intactId="EBI-11978177">
        <id>Q96NT3-2</id>
    </interactant>
    <interactant intactId="EBI-634289">
        <id>Q9H0N5</id>
        <label>PCBD2</label>
    </interactant>
    <organismsDiffer>false</organismsDiffer>
    <experiments>3</experiments>
</comment>
<comment type="interaction">
    <interactant intactId="EBI-11978177">
        <id>Q96NT3-2</id>
    </interactant>
    <interactant intactId="EBI-11956269">
        <id>Q92824-2</id>
        <label>PCSK5</label>
    </interactant>
    <organismsDiffer>false</organismsDiffer>
    <experiments>3</experiments>
</comment>
<comment type="interaction">
    <interactant intactId="EBI-11978177">
        <id>Q96NT3-2</id>
    </interactant>
    <interactant intactId="EBI-357275">
        <id>Q99471</id>
        <label>PFDN5</label>
    </interactant>
    <organismsDiffer>false</organismsDiffer>
    <experiments>3</experiments>
</comment>
<comment type="interaction">
    <interactant intactId="EBI-11978177">
        <id>Q96NT3-2</id>
    </interactant>
    <interactant intactId="EBI-359352">
        <id>P25786</id>
        <label>PSMA1</label>
    </interactant>
    <organismsDiffer>false</organismsDiffer>
    <experiments>3</experiments>
</comment>
<comment type="interaction">
    <interactant intactId="EBI-11978177">
        <id>Q96NT3-2</id>
    </interactant>
    <interactant intactId="EBI-2860297">
        <id>Q03431</id>
        <label>PTH1R</label>
    </interactant>
    <organismsDiffer>false</organismsDiffer>
    <experiments>3</experiments>
</comment>
<comment type="interaction">
    <interactant intactId="EBI-11978177">
        <id>Q96NT3-2</id>
    </interactant>
    <interactant intactId="EBI-12821217">
        <id>Q2I0M5</id>
        <label>RSPO4</label>
    </interactant>
    <organismsDiffer>false</organismsDiffer>
    <experiments>3</experiments>
</comment>
<comment type="interaction">
    <interactant intactId="EBI-11978177">
        <id>Q96NT3-2</id>
    </interactant>
    <interactant intactId="EBI-12145465">
        <id>Q13761-2</id>
        <label>RUNX3</label>
    </interactant>
    <organismsDiffer>false</organismsDiffer>
    <experiments>3</experiments>
</comment>
<comment type="interaction">
    <interactant intactId="EBI-11978177">
        <id>Q96NT3-2</id>
    </interactant>
    <interactant intactId="EBI-12065614">
        <id>Q6ZT89-3</id>
        <label>SLC25A48</label>
    </interactant>
    <organismsDiffer>false</organismsDiffer>
    <experiments>3</experiments>
</comment>
<comment type="interaction">
    <interactant intactId="EBI-11978177">
        <id>Q96NT3-2</id>
    </interactant>
    <interactant intactId="EBI-750494">
        <id>P49901</id>
        <label>SMCP</label>
    </interactant>
    <organismsDiffer>false</organismsDiffer>
    <experiments>3</experiments>
</comment>
<comment type="interaction">
    <interactant intactId="EBI-11978177">
        <id>Q96NT3-2</id>
    </interactant>
    <interactant intactId="EBI-3866665">
        <id>O43609</id>
        <label>SPRY1</label>
    </interactant>
    <organismsDiffer>false</organismsDiffer>
    <experiments>3</experiments>
</comment>
<comment type="interaction">
    <interactant intactId="EBI-11978177">
        <id>Q96NT3-2</id>
    </interactant>
    <interactant intactId="EBI-2682386">
        <id>Q96PV0</id>
        <label>SYNGAP1</label>
    </interactant>
    <organismsDiffer>false</organismsDiffer>
    <experiments>3</experiments>
</comment>
<comment type="interaction">
    <interactant intactId="EBI-11978177">
        <id>Q96NT3-2</id>
    </interactant>
    <interactant intactId="EBI-11139477">
        <id>Q96N21</id>
        <label>TEPSIN</label>
    </interactant>
    <organismsDiffer>false</organismsDiffer>
    <experiments>3</experiments>
</comment>
<comment type="interaction">
    <interactant intactId="EBI-11978177">
        <id>Q96NT3-2</id>
    </interactant>
    <interactant intactId="EBI-11952651">
        <id>Q7Z6R9</id>
        <label>TFAP2D</label>
    </interactant>
    <organismsDiffer>false</organismsDiffer>
    <experiments>5</experiments>
</comment>
<comment type="interaction">
    <interactant intactId="EBI-11978177">
        <id>Q96NT3-2</id>
    </interactant>
    <interactant intactId="EBI-74615">
        <id>Q9H0E2</id>
        <label>TOLLIP</label>
    </interactant>
    <organismsDiffer>false</organismsDiffer>
    <experiments>3</experiments>
</comment>
<comment type="interaction">
    <interactant intactId="EBI-11978177">
        <id>Q96NT3-2</id>
    </interactant>
    <interactant intactId="EBI-5235829">
        <id>Q8IWZ5</id>
        <label>TRIM42</label>
    </interactant>
    <organismsDiffer>false</organismsDiffer>
    <experiments>3</experiments>
</comment>
<comment type="interaction">
    <interactant intactId="EBI-11978177">
        <id>Q96NT3-2</id>
    </interactant>
    <interactant intactId="EBI-8652667">
        <id>O14817</id>
        <label>TSPAN4</label>
    </interactant>
    <organismsDiffer>false</organismsDiffer>
    <experiments>3</experiments>
</comment>
<comment type="interaction">
    <interactant intactId="EBI-11978177">
        <id>Q96NT3-2</id>
    </interactant>
    <interactant intactId="EBI-2932492">
        <id>Q99757</id>
        <label>TXN2</label>
    </interactant>
    <organismsDiffer>false</organismsDiffer>
    <experiments>3</experiments>
</comment>
<comment type="interaction">
    <interactant intactId="EBI-11978177">
        <id>Q96NT3-2</id>
    </interactant>
    <interactant intactId="EBI-10249550">
        <id>Q6EMK4</id>
        <label>VASN</label>
    </interactant>
    <organismsDiffer>false</organismsDiffer>
    <experiments>3</experiments>
</comment>
<comment type="interaction">
    <interactant intactId="EBI-11978177">
        <id>Q96NT3-2</id>
    </interactant>
    <interactant intactId="EBI-12287587">
        <id>B2RXF5</id>
        <label>ZBTB42</label>
    </interactant>
    <organismsDiffer>false</organismsDiffer>
    <experiments>3</experiments>
</comment>
<comment type="interaction">
    <interactant intactId="EBI-11978177">
        <id>Q96NT3-2</id>
    </interactant>
    <interactant intactId="EBI-954111">
        <id>Q8WW36</id>
        <label>ZCCHC13</label>
    </interactant>
    <organismsDiffer>false</organismsDiffer>
    <experiments>3</experiments>
</comment>
<comment type="interaction">
    <interactant intactId="EBI-11978177">
        <id>Q96NT3-2</id>
    </interactant>
    <interactant intactId="EBI-10177272">
        <id>P15622-3</id>
        <label>ZNF250</label>
    </interactant>
    <organismsDiffer>false</organismsDiffer>
    <experiments>5</experiments>
</comment>
<comment type="interaction">
    <interactant intactId="EBI-11978177">
        <id>Q96NT3-2</id>
    </interactant>
    <interactant intactId="EBI-625509">
        <id>Q8N720</id>
        <label>ZNF655</label>
    </interactant>
    <organismsDiffer>false</organismsDiffer>
    <experiments>3</experiments>
</comment>
<comment type="interaction">
    <interactant intactId="EBI-11978177">
        <id>Q96NT3-2</id>
    </interactant>
    <interactant intactId="EBI-12957159">
        <id>P0CH99</id>
        <label>ZNF705D</label>
    </interactant>
    <organismsDiffer>false</organismsDiffer>
    <experiments>3</experiments>
</comment>
<comment type="interaction">
    <interactant intactId="EBI-11978177">
        <id>Q96NT3-2</id>
    </interactant>
    <interactant intactId="EBI-5667516">
        <id>Q9Y2P0</id>
        <label>ZNF835</label>
    </interactant>
    <organismsDiffer>false</organismsDiffer>
    <experiments>3</experiments>
</comment>
<comment type="alternative products">
    <event type="alternative splicing"/>
    <isoform>
        <id>Q96NT3-1</id>
        <name>1</name>
        <sequence type="displayed"/>
    </isoform>
    <isoform>
        <id>Q96NT3-2</id>
        <name>2</name>
        <sequence type="described" ref="VSP_044730"/>
    </isoform>
    <isoform>
        <id>Q96NT3-3</id>
        <name>3</name>
        <sequence type="described" ref="VSP_055753 VSP_044730"/>
    </isoform>
</comment>
<comment type="sequence caution" evidence="3">
    <conflict type="erroneous initiation">
        <sequence resource="EMBL-CDS" id="BAB68411"/>
    </conflict>
    <text>Truncated N-terminus.</text>
</comment>
<proteinExistence type="evidence at protein level"/>
<name>GUCD1_HUMAN</name>
<dbReference type="EMBL" id="AK054681">
    <property type="protein sequence ID" value="BAB70791.1"/>
    <property type="molecule type" value="mRNA"/>
</dbReference>
<dbReference type="EMBL" id="AK098754">
    <property type="status" value="NOT_ANNOTATED_CDS"/>
    <property type="molecule type" value="mRNA"/>
</dbReference>
<dbReference type="EMBL" id="AP000356">
    <property type="status" value="NOT_ANNOTATED_CDS"/>
    <property type="molecule type" value="Genomic_DNA"/>
</dbReference>
<dbReference type="EMBL" id="CH471095">
    <property type="protein sequence ID" value="EAW59667.1"/>
    <property type="molecule type" value="Genomic_DNA"/>
</dbReference>
<dbReference type="EMBL" id="BC002924">
    <property type="protein sequence ID" value="AAH02924.2"/>
    <property type="molecule type" value="mRNA"/>
</dbReference>
<dbReference type="EMBL" id="BC070109">
    <property type="protein sequence ID" value="AAH70109.1"/>
    <property type="molecule type" value="mRNA"/>
</dbReference>
<dbReference type="EMBL" id="AB049215">
    <property type="protein sequence ID" value="BAB68411.1"/>
    <property type="status" value="ALT_INIT"/>
    <property type="molecule type" value="Genomic_DNA"/>
</dbReference>
<dbReference type="CCDS" id="CCDS33621.1">
    <molecule id="Q96NT3-1"/>
</dbReference>
<dbReference type="CCDS" id="CCDS63426.1">
    <molecule id="Q96NT3-2"/>
</dbReference>
<dbReference type="CCDS" id="CCDS63427.1">
    <molecule id="Q96NT3-3"/>
</dbReference>
<dbReference type="RefSeq" id="NP_001271180.1">
    <property type="nucleotide sequence ID" value="NM_001284251.1"/>
</dbReference>
<dbReference type="RefSeq" id="NP_001271181.1">
    <molecule id="Q96NT3-3"/>
    <property type="nucleotide sequence ID" value="NM_001284252.2"/>
</dbReference>
<dbReference type="RefSeq" id="NP_001271183.1">
    <molecule id="Q96NT3-2"/>
    <property type="nucleotide sequence ID" value="NM_001284254.2"/>
</dbReference>
<dbReference type="RefSeq" id="NP_001271184.1">
    <property type="nucleotide sequence ID" value="NM_001284255.1"/>
</dbReference>
<dbReference type="RefSeq" id="NP_001271185.1">
    <property type="nucleotide sequence ID" value="NM_001284256.1"/>
</dbReference>
<dbReference type="RefSeq" id="NP_001271186.1">
    <property type="nucleotide sequence ID" value="NM_001284257.1"/>
</dbReference>
<dbReference type="RefSeq" id="NP_113632.2">
    <molecule id="Q96NT3-1"/>
    <property type="nucleotide sequence ID" value="NM_031444.4"/>
</dbReference>
<dbReference type="BioGRID" id="123697">
    <property type="interactions" value="92"/>
</dbReference>
<dbReference type="FunCoup" id="Q96NT3">
    <property type="interactions" value="168"/>
</dbReference>
<dbReference type="IntAct" id="Q96NT3">
    <property type="interactions" value="83"/>
</dbReference>
<dbReference type="MINT" id="Q96NT3"/>
<dbReference type="STRING" id="9606.ENSP00000479370"/>
<dbReference type="iPTMnet" id="Q96NT3"/>
<dbReference type="PhosphoSitePlus" id="Q96NT3"/>
<dbReference type="SwissPalm" id="Q96NT3"/>
<dbReference type="BioMuta" id="GUCD1"/>
<dbReference type="DMDM" id="143811383"/>
<dbReference type="jPOST" id="Q96NT3"/>
<dbReference type="MassIVE" id="Q96NT3"/>
<dbReference type="PaxDb" id="9606-ENSP00000479370"/>
<dbReference type="PeptideAtlas" id="Q96NT3"/>
<dbReference type="ProteomicsDB" id="6066"/>
<dbReference type="ProteomicsDB" id="77555">
    <molecule id="Q96NT3-1"/>
</dbReference>
<dbReference type="Pumba" id="Q96NT3"/>
<dbReference type="Antibodypedia" id="9753">
    <property type="antibodies" value="81 antibodies from 13 providers"/>
</dbReference>
<dbReference type="DNASU" id="83606"/>
<dbReference type="Ensembl" id="ENST00000398245.8">
    <molecule id="Q96NT3-2"/>
    <property type="protein sequence ID" value="ENSP00000381297.4"/>
    <property type="gene ID" value="ENSG00000138867.17"/>
</dbReference>
<dbReference type="Ensembl" id="ENST00000404664.7">
    <molecule id="Q96NT3-3"/>
    <property type="protein sequence ID" value="ENSP00000384121.3"/>
    <property type="gene ID" value="ENSG00000138867.17"/>
</dbReference>
<dbReference type="Ensembl" id="ENST00000407471.7">
    <molecule id="Q96NT3-1"/>
    <property type="protein sequence ID" value="ENSP00000386076.3"/>
    <property type="gene ID" value="ENSG00000138867.17"/>
</dbReference>
<dbReference type="Ensembl" id="ENST00000435822.6">
    <molecule id="Q96NT3-2"/>
    <property type="protein sequence ID" value="ENSP00000405985.1"/>
    <property type="gene ID" value="ENSG00000138867.17"/>
</dbReference>
<dbReference type="GeneID" id="83606"/>
<dbReference type="KEGG" id="hsa:83606"/>
<dbReference type="MANE-Select" id="ENST00000435822.6">
    <molecule id="Q96NT3-2"/>
    <property type="protein sequence ID" value="ENSP00000405985.1"/>
    <property type="RefSeq nucleotide sequence ID" value="NM_001284254.2"/>
    <property type="RefSeq protein sequence ID" value="NP_001271183.1"/>
</dbReference>
<dbReference type="UCSC" id="uc003aah.4">
    <molecule id="Q96NT3-1"/>
    <property type="organism name" value="human"/>
</dbReference>
<dbReference type="AGR" id="HGNC:14237"/>
<dbReference type="CTD" id="83606"/>
<dbReference type="DisGeNET" id="83606"/>
<dbReference type="GeneCards" id="GUCD1"/>
<dbReference type="HGNC" id="HGNC:14237">
    <property type="gene designation" value="GUCD1"/>
</dbReference>
<dbReference type="HPA" id="ENSG00000138867">
    <property type="expression patterns" value="Low tissue specificity"/>
</dbReference>
<dbReference type="MIM" id="619171">
    <property type="type" value="gene"/>
</dbReference>
<dbReference type="neXtProt" id="NX_Q96NT3"/>
<dbReference type="OpenTargets" id="ENSG00000138867"/>
<dbReference type="PharmGKB" id="PA25882"/>
<dbReference type="VEuPathDB" id="HostDB:ENSG00000138867"/>
<dbReference type="eggNOG" id="KOG4621">
    <property type="taxonomic scope" value="Eukaryota"/>
</dbReference>
<dbReference type="GeneTree" id="ENSGT00390000000571"/>
<dbReference type="HOGENOM" id="CLU_064395_0_1_1"/>
<dbReference type="InParanoid" id="Q96NT3"/>
<dbReference type="OMA" id="VQDIQKH"/>
<dbReference type="OrthoDB" id="206796at2759"/>
<dbReference type="PAN-GO" id="Q96NT3">
    <property type="GO annotations" value="0 GO annotations based on evolutionary models"/>
</dbReference>
<dbReference type="PhylomeDB" id="Q96NT3"/>
<dbReference type="TreeFam" id="TF324062"/>
<dbReference type="PathwayCommons" id="Q96NT3"/>
<dbReference type="SignaLink" id="Q96NT3"/>
<dbReference type="SIGNOR" id="Q96NT3"/>
<dbReference type="BioGRID-ORCS" id="83606">
    <property type="hits" value="7 hits in 1153 CRISPR screens"/>
</dbReference>
<dbReference type="ChiTaRS" id="GUCD1">
    <property type="organism name" value="human"/>
</dbReference>
<dbReference type="GenomeRNAi" id="83606"/>
<dbReference type="Pharos" id="Q96NT3">
    <property type="development level" value="Tbio"/>
</dbReference>
<dbReference type="PRO" id="PR:Q96NT3"/>
<dbReference type="Proteomes" id="UP000005640">
    <property type="component" value="Chromosome 22"/>
</dbReference>
<dbReference type="RNAct" id="Q96NT3">
    <property type="molecule type" value="protein"/>
</dbReference>
<dbReference type="Bgee" id="ENSG00000138867">
    <property type="expression patterns" value="Expressed in apex of heart and 182 other cell types or tissues"/>
</dbReference>
<dbReference type="ExpressionAtlas" id="Q96NT3">
    <property type="expression patterns" value="baseline and differential"/>
</dbReference>
<dbReference type="GO" id="GO:0097421">
    <property type="term" value="P:liver regeneration"/>
    <property type="evidence" value="ECO:0007669"/>
    <property type="project" value="Ensembl"/>
</dbReference>
<dbReference type="GO" id="GO:0051591">
    <property type="term" value="P:response to cAMP"/>
    <property type="evidence" value="ECO:0007669"/>
    <property type="project" value="Ensembl"/>
</dbReference>
<dbReference type="Gene3D" id="3.90.70.10">
    <property type="entry name" value="Cysteine proteinases"/>
    <property type="match status" value="1"/>
</dbReference>
<dbReference type="InterPro" id="IPR018616">
    <property type="entry name" value="GUCD1"/>
</dbReference>
<dbReference type="PANTHER" id="PTHR31400">
    <property type="entry name" value="GUANYLYL CYCLASE DOMAIN CONTAINING PROTEIN 1 GUCD1"/>
    <property type="match status" value="1"/>
</dbReference>
<dbReference type="PANTHER" id="PTHR31400:SF1">
    <property type="entry name" value="PROTEIN GUCD1"/>
    <property type="match status" value="1"/>
</dbReference>
<dbReference type="Pfam" id="PF09778">
    <property type="entry name" value="Guanylate_cyc_2"/>
    <property type="match status" value="1"/>
</dbReference>
<organism>
    <name type="scientific">Homo sapiens</name>
    <name type="common">Human</name>
    <dbReference type="NCBI Taxonomy" id="9606"/>
    <lineage>
        <taxon>Eukaryota</taxon>
        <taxon>Metazoa</taxon>
        <taxon>Chordata</taxon>
        <taxon>Craniata</taxon>
        <taxon>Vertebrata</taxon>
        <taxon>Euteleostomi</taxon>
        <taxon>Mammalia</taxon>
        <taxon>Eutheria</taxon>
        <taxon>Euarchontoglires</taxon>
        <taxon>Primates</taxon>
        <taxon>Haplorrhini</taxon>
        <taxon>Catarrhini</taxon>
        <taxon>Hominidae</taxon>
        <taxon>Homo</taxon>
    </lineage>
</organism>
<sequence>MRTEAEAAGPPLEPGDFVQLPVPVIQQLYHWDCGLACSRMVLRYLGQLDDSEFERALQKLQLTRSIWTIDLAYLMHHFGVRHRFCTQTLGVDKGYKNQSFYRKHFDTEETRVNQLFAQAKACKVLVEKCTVSVKDIQAHLAQGHVAIVLVNSGVLHCDLCSSPVKYCCFTPSGHHCFCRTPDYQGHFIVLRGYNRATGCIFYNNPAYADPGMCSTSISNFEEARTSYGTDEDILFVYLDS</sequence>